<proteinExistence type="evidence at protein level"/>
<feature type="peptide" id="PRO_0000421523" description="Extended FMRFamide-7" evidence="3">
    <location>
        <begin position="1"/>
        <end position="9"/>
    </location>
</feature>
<feature type="modified residue" description="Leucine amide" evidence="3">
    <location>
        <position position="9"/>
    </location>
</feature>
<feature type="unsure residue" description="L or I" evidence="3">
    <location>
        <position position="9"/>
    </location>
</feature>
<evidence type="ECO:0000250" key="1">
    <source>
        <dbReference type="UniProtKB" id="P34405"/>
    </source>
</evidence>
<evidence type="ECO:0000255" key="2"/>
<evidence type="ECO:0000269" key="3">
    <source>
    </source>
</evidence>
<evidence type="ECO:0000303" key="4">
    <source>
    </source>
</evidence>
<evidence type="ECO:0000305" key="5"/>
<evidence type="ECO:0000305" key="6">
    <source>
    </source>
</evidence>
<reference evidence="5" key="1">
    <citation type="journal article" date="2012" name="Syst. Biol.">
        <title>Peptidomics-based phylogeny and biogeography of Mantophasmatodea (Hexapoda).</title>
        <authorList>
            <person name="Predel R."/>
            <person name="Neupert S."/>
            <person name="Huetteroth W."/>
            <person name="Kahnt J."/>
            <person name="Waidelich D."/>
            <person name="Roth S."/>
        </authorList>
    </citation>
    <scope>PROTEIN SEQUENCE</scope>
    <scope>AMIDATION AT LEU-9</scope>
    <source>
        <tissue evidence="3">Thoracic perisympathetic organs</tissue>
    </source>
</reference>
<organism>
    <name type="scientific">Karoophasma biedouwense</name>
    <name type="common">Gladiator</name>
    <name type="synonym">Heel-walker</name>
    <dbReference type="NCBI Taxonomy" id="253133"/>
    <lineage>
        <taxon>Eukaryota</taxon>
        <taxon>Metazoa</taxon>
        <taxon>Ecdysozoa</taxon>
        <taxon>Arthropoda</taxon>
        <taxon>Hexapoda</taxon>
        <taxon>Insecta</taxon>
        <taxon>Pterygota</taxon>
        <taxon>Neoptera</taxon>
        <taxon>Polyneoptera</taxon>
        <taxon>Mantophasmatodea</taxon>
        <taxon>Austrophasmatidae</taxon>
        <taxon>Karoophasma</taxon>
    </lineage>
</organism>
<keyword id="KW-0027">Amidation</keyword>
<keyword id="KW-0903">Direct protein sequencing</keyword>
<keyword id="KW-0527">Neuropeptide</keyword>
<keyword id="KW-0964">Secreted</keyword>
<sequence>ARSDNFVRL</sequence>
<protein>
    <recommendedName>
        <fullName evidence="4">Extended FMRFamide-7</fullName>
        <shortName evidence="4">FMRFa-7</shortName>
    </recommendedName>
</protein>
<accession>B3A067</accession>
<comment type="function">
    <text evidence="1">FMRFamides and FMRFamide-like peptides are neuropeptides.</text>
</comment>
<comment type="subcellular location">
    <subcellularLocation>
        <location evidence="6">Secreted</location>
    </subcellularLocation>
</comment>
<comment type="similarity">
    <text evidence="2">Belongs to the FARP (FMRF amide related peptide) family.</text>
</comment>
<dbReference type="GO" id="GO:0005576">
    <property type="term" value="C:extracellular region"/>
    <property type="evidence" value="ECO:0007669"/>
    <property type="project" value="UniProtKB-SubCell"/>
</dbReference>
<dbReference type="GO" id="GO:0007218">
    <property type="term" value="P:neuropeptide signaling pathway"/>
    <property type="evidence" value="ECO:0007669"/>
    <property type="project" value="UniProtKB-KW"/>
</dbReference>
<name>FAR7_KARBI</name>